<proteinExistence type="inferred from homology"/>
<sequence length="37" mass="4657">MNQKEFQAVLDWMLSHTIIQFHEYNYMLQKSLPFLRR</sequence>
<organism>
    <name type="scientific">Bacillus phage PZA</name>
    <name type="common">Bacteriophage PZA</name>
    <dbReference type="NCBI Taxonomy" id="10757"/>
    <lineage>
        <taxon>Viruses</taxon>
        <taxon>Duplodnaviria</taxon>
        <taxon>Heunggongvirae</taxon>
        <taxon>Uroviricota</taxon>
        <taxon>Caudoviricetes</taxon>
        <taxon>Salasmaviridae</taxon>
        <taxon>Picovirinae</taxon>
        <taxon>Salasvirus</taxon>
        <taxon>Salasvirus PZA</taxon>
    </lineage>
</organism>
<feature type="chain" id="PRO_0000106609" description="Gene product 16.5">
    <location>
        <begin position="1"/>
        <end position="37"/>
    </location>
</feature>
<gene>
    <name type="primary">16.5</name>
</gene>
<reference key="1">
    <citation type="journal article" date="1986" name="Gene">
        <title>Nucleotide sequence of the right early region of Bacillus subtilis phage PZA completes the 19366-bp sequence of PZA genome. Comparison with the homologous sequence of phage phi 29.</title>
        <authorList>
            <person name="Paces V."/>
            <person name="Vlcek C."/>
            <person name="Urbanek P."/>
            <person name="Hostomsky Z."/>
        </authorList>
    </citation>
    <scope>NUCLEOTIDE SEQUENCE [GENOMIC DNA]</scope>
</reference>
<name>GP165_BPPZA</name>
<accession>P68932</accession>
<accession>P08384</accession>
<comment type="similarity">
    <text evidence="1">Belongs to the phi29likevirus gp16.5 family.</text>
</comment>
<protein>
    <recommendedName>
        <fullName>Gene product 16.5</fullName>
        <shortName>gp16.5</shortName>
    </recommendedName>
    <alternativeName>
        <fullName>Early protein GP16.5</fullName>
    </alternativeName>
    <alternativeName>
        <fullName>Protein p16.5</fullName>
    </alternativeName>
</protein>
<keyword id="KW-0244">Early protein</keyword>
<evidence type="ECO:0000305" key="1"/>
<dbReference type="EMBL" id="M11813">
    <property type="protein sequence ID" value="AAA88494.1"/>
    <property type="molecule type" value="Genomic_DNA"/>
</dbReference>
<dbReference type="PIR" id="A29004">
    <property type="entry name" value="WRBP65"/>
</dbReference>
<dbReference type="SMR" id="P68932"/>
<dbReference type="Proteomes" id="UP000000855">
    <property type="component" value="Segment"/>
</dbReference>
<organismHost>
    <name type="scientific">Bacillus subtilis</name>
    <dbReference type="NCBI Taxonomy" id="1423"/>
</organismHost>